<feature type="chain" id="PRO_0000415589" description="Hemoglobin subunit alpha">
    <location>
        <begin position="1"/>
        <end position="141"/>
    </location>
</feature>
<feature type="domain" description="Globin" evidence="3">
    <location>
        <begin position="1"/>
        <end position="141"/>
    </location>
</feature>
<feature type="binding site" evidence="3">
    <location>
        <position position="58"/>
    </location>
    <ligand>
        <name>O2</name>
        <dbReference type="ChEBI" id="CHEBI:15379"/>
    </ligand>
</feature>
<feature type="binding site" description="proximal binding residue" evidence="3">
    <location>
        <position position="87"/>
    </location>
    <ligand>
        <name>heme b</name>
        <dbReference type="ChEBI" id="CHEBI:60344"/>
    </ligand>
    <ligandPart>
        <name>Fe</name>
        <dbReference type="ChEBI" id="CHEBI:18248"/>
    </ligandPart>
</feature>
<feature type="modified residue" description="Phosphoserine" evidence="2">
    <location>
        <position position="3"/>
    </location>
</feature>
<feature type="modified residue" description="N6-succinyllysine" evidence="1">
    <location>
        <position position="7"/>
    </location>
</feature>
<feature type="modified residue" description="Phosphothreonine" evidence="2">
    <location>
        <position position="8"/>
    </location>
</feature>
<feature type="modified residue" description="N6-succinyllysine" evidence="1">
    <location>
        <position position="11"/>
    </location>
</feature>
<feature type="modified residue" description="N6-acetyllysine; alternate" evidence="2">
    <location>
        <position position="16"/>
    </location>
</feature>
<feature type="modified residue" description="N6-succinyllysine; alternate" evidence="1">
    <location>
        <position position="16"/>
    </location>
</feature>
<feature type="modified residue" description="Phosphotyrosine" evidence="2">
    <location>
        <position position="24"/>
    </location>
</feature>
<feature type="modified residue" description="Phosphoserine" evidence="2">
    <location>
        <position position="35"/>
    </location>
</feature>
<feature type="modified residue" description="N6-succinyllysine" evidence="1">
    <location>
        <position position="40"/>
    </location>
</feature>
<feature type="modified residue" description="Phosphoserine" evidence="2">
    <location>
        <position position="49"/>
    </location>
</feature>
<feature type="modified residue" description="Phosphoserine" evidence="1">
    <location>
        <position position="102"/>
    </location>
</feature>
<feature type="modified residue" description="Phosphothreonine" evidence="1">
    <location>
        <position position="108"/>
    </location>
</feature>
<feature type="modified residue" description="Phosphoserine" evidence="1">
    <location>
        <position position="124"/>
    </location>
</feature>
<feature type="modified residue" description="Phosphoserine" evidence="1">
    <location>
        <position position="131"/>
    </location>
</feature>
<feature type="modified residue" description="Phosphothreonine" evidence="1">
    <location>
        <position position="134"/>
    </location>
</feature>
<feature type="modified residue" description="Phosphothreonine" evidence="1">
    <location>
        <position position="137"/>
    </location>
</feature>
<feature type="modified residue" description="Phosphoserine" evidence="1">
    <location>
        <position position="138"/>
    </location>
</feature>
<feature type="unsure residue" description="L or I" evidence="4">
    <location>
        <position position="2"/>
    </location>
</feature>
<feature type="unsure residue" description="L or I" evidence="4">
    <location>
        <position position="17"/>
    </location>
</feature>
<feature type="unsure residue" description="L or I" evidence="4">
    <location>
        <position position="29"/>
    </location>
</feature>
<feature type="unsure residue" description="L or I" evidence="4">
    <location>
        <position position="34"/>
    </location>
</feature>
<feature type="unsure residue" description="L or I" evidence="4">
    <location>
        <position position="48"/>
    </location>
</feature>
<feature type="unsure residue" description="L or I" evidence="4">
    <location>
        <position position="55"/>
    </location>
</feature>
<feature type="unsure residue" description="L or I" evidence="4">
    <location>
        <position position="66"/>
    </location>
</feature>
<feature type="unsure residue" description="L or I" evidence="4">
    <location>
        <position position="76"/>
    </location>
</feature>
<feature type="unsure residue" description="L or I" evidence="4">
    <location>
        <position position="80"/>
    </location>
</feature>
<feature type="unsure residue" description="L or I" evidence="4">
    <location>
        <position position="83"/>
    </location>
</feature>
<feature type="unsure residue" description="L or I" evidence="4">
    <location>
        <position position="86"/>
    </location>
</feature>
<feature type="unsure residue" description="L or I" evidence="4">
    <location>
        <position position="91"/>
    </location>
</feature>
<feature type="unsure residue" description="L or I" evidence="4">
    <location>
        <position position="100"/>
    </location>
</feature>
<feature type="unsure residue" description="L or I" evidence="4">
    <location>
        <position position="101"/>
    </location>
</feature>
<feature type="unsure residue" description="L or I" evidence="4">
    <location>
        <position position="105"/>
    </location>
</feature>
<feature type="unsure residue" description="L or I" evidence="4">
    <location>
        <position position="106"/>
    </location>
</feature>
<feature type="unsure residue" description="L or I" evidence="4">
    <location>
        <position position="109"/>
    </location>
</feature>
<feature type="unsure residue" description="L or I" evidence="4">
    <location>
        <position position="113"/>
    </location>
</feature>
<feature type="unsure residue" description="L or I" evidence="4">
    <location>
        <position position="125"/>
    </location>
</feature>
<feature type="unsure residue" description="L or I" evidence="4">
    <location>
        <position position="129"/>
    </location>
</feature>
<feature type="unsure residue" description="L or I" evidence="4">
    <location>
        <position position="136"/>
    </location>
</feature>
<keyword id="KW-0007">Acetylation</keyword>
<keyword id="KW-0903">Direct protein sequencing</keyword>
<keyword id="KW-0349">Heme</keyword>
<keyword id="KW-0408">Iron</keyword>
<keyword id="KW-0479">Metal-binding</keyword>
<keyword id="KW-0561">Oxygen transport</keyword>
<keyword id="KW-0597">Phosphoprotein</keyword>
<keyword id="KW-0813">Transport</keyword>
<name>HBA_OTOBE</name>
<reference evidence="6" key="1">
    <citation type="journal article" date="2012" name="Biol. Chem.">
        <title>Development of a host blood meal database: de novo sequencing of hemoglobin from nine small mammals using mass spectrometry.</title>
        <authorList>
            <person name="Laskay U.A."/>
            <person name="Burg J."/>
            <person name="Kaleta E.J."/>
            <person name="Vilcins I.M."/>
            <person name="Telford Iii S.R."/>
            <person name="Barbour A.G."/>
            <person name="Wysocki V.H."/>
        </authorList>
    </citation>
    <scope>PROTEIN SEQUENCE</scope>
    <source>
        <tissue evidence="4">Erythrocyte</tissue>
    </source>
</reference>
<dbReference type="BMRB" id="B3EWC9"/>
<dbReference type="SMR" id="B3EWC9"/>
<dbReference type="GO" id="GO:0072562">
    <property type="term" value="C:blood microparticle"/>
    <property type="evidence" value="ECO:0007669"/>
    <property type="project" value="TreeGrafter"/>
</dbReference>
<dbReference type="GO" id="GO:0031838">
    <property type="term" value="C:haptoglobin-hemoglobin complex"/>
    <property type="evidence" value="ECO:0007669"/>
    <property type="project" value="TreeGrafter"/>
</dbReference>
<dbReference type="GO" id="GO:0005833">
    <property type="term" value="C:hemoglobin complex"/>
    <property type="evidence" value="ECO:0007669"/>
    <property type="project" value="InterPro"/>
</dbReference>
<dbReference type="GO" id="GO:0031720">
    <property type="term" value="F:haptoglobin binding"/>
    <property type="evidence" value="ECO:0007669"/>
    <property type="project" value="TreeGrafter"/>
</dbReference>
<dbReference type="GO" id="GO:0020037">
    <property type="term" value="F:heme binding"/>
    <property type="evidence" value="ECO:0007669"/>
    <property type="project" value="InterPro"/>
</dbReference>
<dbReference type="GO" id="GO:0005506">
    <property type="term" value="F:iron ion binding"/>
    <property type="evidence" value="ECO:0007669"/>
    <property type="project" value="InterPro"/>
</dbReference>
<dbReference type="GO" id="GO:0043177">
    <property type="term" value="F:organic acid binding"/>
    <property type="evidence" value="ECO:0007669"/>
    <property type="project" value="TreeGrafter"/>
</dbReference>
<dbReference type="GO" id="GO:0019825">
    <property type="term" value="F:oxygen binding"/>
    <property type="evidence" value="ECO:0007669"/>
    <property type="project" value="InterPro"/>
</dbReference>
<dbReference type="GO" id="GO:0005344">
    <property type="term" value="F:oxygen carrier activity"/>
    <property type="evidence" value="ECO:0007669"/>
    <property type="project" value="UniProtKB-KW"/>
</dbReference>
<dbReference type="GO" id="GO:0004601">
    <property type="term" value="F:peroxidase activity"/>
    <property type="evidence" value="ECO:0007669"/>
    <property type="project" value="TreeGrafter"/>
</dbReference>
<dbReference type="GO" id="GO:0042744">
    <property type="term" value="P:hydrogen peroxide catabolic process"/>
    <property type="evidence" value="ECO:0007669"/>
    <property type="project" value="TreeGrafter"/>
</dbReference>
<dbReference type="CDD" id="cd08927">
    <property type="entry name" value="Hb-alpha-like"/>
    <property type="match status" value="1"/>
</dbReference>
<dbReference type="FunFam" id="1.10.490.10:FF:000002">
    <property type="entry name" value="Hemoglobin subunit alpha"/>
    <property type="match status" value="1"/>
</dbReference>
<dbReference type="Gene3D" id="1.10.490.10">
    <property type="entry name" value="Globins"/>
    <property type="match status" value="1"/>
</dbReference>
<dbReference type="InterPro" id="IPR000971">
    <property type="entry name" value="Globin"/>
</dbReference>
<dbReference type="InterPro" id="IPR009050">
    <property type="entry name" value="Globin-like_sf"/>
</dbReference>
<dbReference type="InterPro" id="IPR012292">
    <property type="entry name" value="Globin/Proto"/>
</dbReference>
<dbReference type="InterPro" id="IPR002338">
    <property type="entry name" value="Hemoglobin_a-typ"/>
</dbReference>
<dbReference type="InterPro" id="IPR050056">
    <property type="entry name" value="Hemoglobin_oxygen_transport"/>
</dbReference>
<dbReference type="InterPro" id="IPR002339">
    <property type="entry name" value="Hemoglobin_pi"/>
</dbReference>
<dbReference type="PANTHER" id="PTHR11442">
    <property type="entry name" value="HEMOGLOBIN FAMILY MEMBER"/>
    <property type="match status" value="1"/>
</dbReference>
<dbReference type="PANTHER" id="PTHR11442:SF48">
    <property type="entry name" value="HEMOGLOBIN SUBUNIT ALPHA"/>
    <property type="match status" value="1"/>
</dbReference>
<dbReference type="Pfam" id="PF00042">
    <property type="entry name" value="Globin"/>
    <property type="match status" value="1"/>
</dbReference>
<dbReference type="PRINTS" id="PR00612">
    <property type="entry name" value="ALPHAHAEM"/>
</dbReference>
<dbReference type="PRINTS" id="PR00815">
    <property type="entry name" value="PIHAEM"/>
</dbReference>
<dbReference type="SUPFAM" id="SSF46458">
    <property type="entry name" value="Globin-like"/>
    <property type="match status" value="1"/>
</dbReference>
<dbReference type="PROSITE" id="PS01033">
    <property type="entry name" value="GLOBIN"/>
    <property type="match status" value="1"/>
</dbReference>
<evidence type="ECO:0000250" key="1">
    <source>
        <dbReference type="UniProtKB" id="P01942"/>
    </source>
</evidence>
<evidence type="ECO:0000250" key="2">
    <source>
        <dbReference type="UniProtKB" id="P69905"/>
    </source>
</evidence>
<evidence type="ECO:0000255" key="3">
    <source>
        <dbReference type="PROSITE-ProRule" id="PRU00238"/>
    </source>
</evidence>
<evidence type="ECO:0000269" key="4">
    <source>
    </source>
</evidence>
<evidence type="ECO:0000303" key="5">
    <source>
    </source>
</evidence>
<evidence type="ECO:0000305" key="6"/>
<accession>B3EWC9</accession>
<comment type="function">
    <text evidence="6">Involved in oxygen transport from the lung to the various peripheral tissues.</text>
</comment>
<comment type="subunit">
    <text evidence="6">Heterotetramer of two alpha chains and two beta chains.</text>
</comment>
<comment type="tissue specificity">
    <text evidence="6">Red blood cells.</text>
</comment>
<comment type="similarity">
    <text evidence="3">Belongs to the globin family.</text>
</comment>
<protein>
    <recommendedName>
        <fullName evidence="5">Hemoglobin subunit alpha</fullName>
    </recommendedName>
</protein>
<organism>
    <name type="scientific">Otospermophilus beecheyi</name>
    <name type="common">California ground squirrel</name>
    <name type="synonym">Spermophilus beecheyi</name>
    <dbReference type="NCBI Taxonomy" id="34862"/>
    <lineage>
        <taxon>Eukaryota</taxon>
        <taxon>Metazoa</taxon>
        <taxon>Chordata</taxon>
        <taxon>Craniata</taxon>
        <taxon>Vertebrata</taxon>
        <taxon>Euteleostomi</taxon>
        <taxon>Mammalia</taxon>
        <taxon>Eutheria</taxon>
        <taxon>Euarchontoglires</taxon>
        <taxon>Glires</taxon>
        <taxon>Rodentia</taxon>
        <taxon>Sciuromorpha</taxon>
        <taxon>Sciuridae</taxon>
        <taxon>Xerinae</taxon>
        <taxon>Marmotini</taxon>
        <taxon>Otospermophilus</taxon>
    </lineage>
</organism>
<proteinExistence type="evidence at protein level"/>
<sequence>VLSPADKTNVKASWEKLGGHGAAYGAEALERMFLSFPTTKTYFPHFDLSHGSAQLQGHGKKVADALANAAAHVDDLPGALSALSDLHAHKLRVDPVNFKLLSHCLLVTLAAHLPADFTPAVHASLDKFLASVSTVLTSKYR</sequence>